<organism>
    <name type="scientific">Natranaerobius thermophilus (strain ATCC BAA-1301 / DSM 18059 / JW/NM-WN-LF)</name>
    <dbReference type="NCBI Taxonomy" id="457570"/>
    <lineage>
        <taxon>Bacteria</taxon>
        <taxon>Bacillati</taxon>
        <taxon>Bacillota</taxon>
        <taxon>Clostridia</taxon>
        <taxon>Natranaerobiales</taxon>
        <taxon>Natranaerobiaceae</taxon>
        <taxon>Natranaerobius</taxon>
    </lineage>
</organism>
<name>RS20_NATTJ</name>
<keyword id="KW-1185">Reference proteome</keyword>
<keyword id="KW-0687">Ribonucleoprotein</keyword>
<keyword id="KW-0689">Ribosomal protein</keyword>
<keyword id="KW-0694">RNA-binding</keyword>
<keyword id="KW-0699">rRNA-binding</keyword>
<feature type="chain" id="PRO_1000126483" description="Small ribosomal subunit protein bS20">
    <location>
        <begin position="1"/>
        <end position="88"/>
    </location>
</feature>
<protein>
    <recommendedName>
        <fullName evidence="1">Small ribosomal subunit protein bS20</fullName>
    </recommendedName>
    <alternativeName>
        <fullName evidence="2">30S ribosomal protein S20</fullName>
    </alternativeName>
</protein>
<gene>
    <name evidence="1" type="primary">rpsT</name>
    <name type="ordered locus">Nther_1176</name>
</gene>
<sequence length="88" mass="10014">MPNIKSAKKRVRVTRKKTLRNKHVKTMVKTAIKKFELALQNEDVETAREELKNATKTIDKAVSKGVIHKNNAARKKSRLTAKFNNIAS</sequence>
<reference key="1">
    <citation type="submission" date="2008-04" db="EMBL/GenBank/DDBJ databases">
        <title>Complete sequence of chromosome of Natranaerobius thermophilus JW/NM-WN-LF.</title>
        <authorList>
            <consortium name="US DOE Joint Genome Institute"/>
            <person name="Copeland A."/>
            <person name="Lucas S."/>
            <person name="Lapidus A."/>
            <person name="Glavina del Rio T."/>
            <person name="Dalin E."/>
            <person name="Tice H."/>
            <person name="Bruce D."/>
            <person name="Goodwin L."/>
            <person name="Pitluck S."/>
            <person name="Chertkov O."/>
            <person name="Brettin T."/>
            <person name="Detter J.C."/>
            <person name="Han C."/>
            <person name="Kuske C.R."/>
            <person name="Schmutz J."/>
            <person name="Larimer F."/>
            <person name="Land M."/>
            <person name="Hauser L."/>
            <person name="Kyrpides N."/>
            <person name="Lykidis A."/>
            <person name="Mesbah N.M."/>
            <person name="Wiegel J."/>
        </authorList>
    </citation>
    <scope>NUCLEOTIDE SEQUENCE [LARGE SCALE GENOMIC DNA]</scope>
    <source>
        <strain>ATCC BAA-1301 / DSM 18059 / JW/NM-WN-LF</strain>
    </source>
</reference>
<comment type="function">
    <text evidence="1">Binds directly to 16S ribosomal RNA.</text>
</comment>
<comment type="similarity">
    <text evidence="1">Belongs to the bacterial ribosomal protein bS20 family.</text>
</comment>
<proteinExistence type="inferred from homology"/>
<evidence type="ECO:0000255" key="1">
    <source>
        <dbReference type="HAMAP-Rule" id="MF_00500"/>
    </source>
</evidence>
<evidence type="ECO:0000305" key="2"/>
<accession>B2A1L9</accession>
<dbReference type="EMBL" id="CP001034">
    <property type="protein sequence ID" value="ACB84759.1"/>
    <property type="molecule type" value="Genomic_DNA"/>
</dbReference>
<dbReference type="RefSeq" id="WP_012447634.1">
    <property type="nucleotide sequence ID" value="NC_010718.1"/>
</dbReference>
<dbReference type="SMR" id="B2A1L9"/>
<dbReference type="FunCoup" id="B2A1L9">
    <property type="interactions" value="359"/>
</dbReference>
<dbReference type="STRING" id="457570.Nther_1176"/>
<dbReference type="KEGG" id="nth:Nther_1176"/>
<dbReference type="eggNOG" id="COG0268">
    <property type="taxonomic scope" value="Bacteria"/>
</dbReference>
<dbReference type="HOGENOM" id="CLU_160655_1_0_9"/>
<dbReference type="InParanoid" id="B2A1L9"/>
<dbReference type="OrthoDB" id="9808392at2"/>
<dbReference type="Proteomes" id="UP000001683">
    <property type="component" value="Chromosome"/>
</dbReference>
<dbReference type="GO" id="GO:0005829">
    <property type="term" value="C:cytosol"/>
    <property type="evidence" value="ECO:0007669"/>
    <property type="project" value="TreeGrafter"/>
</dbReference>
<dbReference type="GO" id="GO:0015935">
    <property type="term" value="C:small ribosomal subunit"/>
    <property type="evidence" value="ECO:0007669"/>
    <property type="project" value="TreeGrafter"/>
</dbReference>
<dbReference type="GO" id="GO:0070181">
    <property type="term" value="F:small ribosomal subunit rRNA binding"/>
    <property type="evidence" value="ECO:0007669"/>
    <property type="project" value="TreeGrafter"/>
</dbReference>
<dbReference type="GO" id="GO:0003735">
    <property type="term" value="F:structural constituent of ribosome"/>
    <property type="evidence" value="ECO:0007669"/>
    <property type="project" value="InterPro"/>
</dbReference>
<dbReference type="GO" id="GO:0006412">
    <property type="term" value="P:translation"/>
    <property type="evidence" value="ECO:0007669"/>
    <property type="project" value="UniProtKB-UniRule"/>
</dbReference>
<dbReference type="FunFam" id="1.20.58.110:FF:000001">
    <property type="entry name" value="30S ribosomal protein S20"/>
    <property type="match status" value="1"/>
</dbReference>
<dbReference type="Gene3D" id="1.20.58.110">
    <property type="entry name" value="Ribosomal protein S20"/>
    <property type="match status" value="1"/>
</dbReference>
<dbReference type="HAMAP" id="MF_00500">
    <property type="entry name" value="Ribosomal_bS20"/>
    <property type="match status" value="1"/>
</dbReference>
<dbReference type="InterPro" id="IPR002583">
    <property type="entry name" value="Ribosomal_bS20"/>
</dbReference>
<dbReference type="InterPro" id="IPR036510">
    <property type="entry name" value="Ribosomal_bS20_sf"/>
</dbReference>
<dbReference type="NCBIfam" id="TIGR00029">
    <property type="entry name" value="S20"/>
    <property type="match status" value="1"/>
</dbReference>
<dbReference type="PANTHER" id="PTHR33398">
    <property type="entry name" value="30S RIBOSOMAL PROTEIN S20"/>
    <property type="match status" value="1"/>
</dbReference>
<dbReference type="PANTHER" id="PTHR33398:SF1">
    <property type="entry name" value="SMALL RIBOSOMAL SUBUNIT PROTEIN BS20C"/>
    <property type="match status" value="1"/>
</dbReference>
<dbReference type="Pfam" id="PF01649">
    <property type="entry name" value="Ribosomal_S20p"/>
    <property type="match status" value="1"/>
</dbReference>
<dbReference type="SUPFAM" id="SSF46992">
    <property type="entry name" value="Ribosomal protein S20"/>
    <property type="match status" value="1"/>
</dbReference>